<protein>
    <recommendedName>
        <fullName evidence="1">Diaminopimelate epimerase</fullName>
        <shortName evidence="1">DAP epimerase</shortName>
        <ecNumber evidence="1">5.1.1.7</ecNumber>
    </recommendedName>
    <alternativeName>
        <fullName evidence="1">PLP-independent amino acid racemase</fullName>
    </alternativeName>
</protein>
<dbReference type="EC" id="5.1.1.7" evidence="1"/>
<dbReference type="EMBL" id="CP000352">
    <property type="protein sequence ID" value="ABF07039.1"/>
    <property type="molecule type" value="Genomic_DNA"/>
</dbReference>
<dbReference type="RefSeq" id="WP_011515066.1">
    <property type="nucleotide sequence ID" value="NC_007973.1"/>
</dbReference>
<dbReference type="SMR" id="Q1LS37"/>
<dbReference type="STRING" id="266264.Rmet_0153"/>
<dbReference type="KEGG" id="rme:Rmet_0153"/>
<dbReference type="eggNOG" id="COG0253">
    <property type="taxonomic scope" value="Bacteria"/>
</dbReference>
<dbReference type="HOGENOM" id="CLU_053306_1_1_4"/>
<dbReference type="UniPathway" id="UPA00034">
    <property type="reaction ID" value="UER00025"/>
</dbReference>
<dbReference type="Proteomes" id="UP000002429">
    <property type="component" value="Chromosome"/>
</dbReference>
<dbReference type="GO" id="GO:0005829">
    <property type="term" value="C:cytosol"/>
    <property type="evidence" value="ECO:0007669"/>
    <property type="project" value="TreeGrafter"/>
</dbReference>
<dbReference type="GO" id="GO:0008837">
    <property type="term" value="F:diaminopimelate epimerase activity"/>
    <property type="evidence" value="ECO:0007669"/>
    <property type="project" value="UniProtKB-UniRule"/>
</dbReference>
<dbReference type="GO" id="GO:0009089">
    <property type="term" value="P:lysine biosynthetic process via diaminopimelate"/>
    <property type="evidence" value="ECO:0007669"/>
    <property type="project" value="UniProtKB-UniRule"/>
</dbReference>
<dbReference type="FunFam" id="3.10.310.10:FF:000001">
    <property type="entry name" value="Diaminopimelate epimerase"/>
    <property type="match status" value="1"/>
</dbReference>
<dbReference type="Gene3D" id="3.10.310.10">
    <property type="entry name" value="Diaminopimelate Epimerase, Chain A, domain 1"/>
    <property type="match status" value="2"/>
</dbReference>
<dbReference type="HAMAP" id="MF_00197">
    <property type="entry name" value="DAP_epimerase"/>
    <property type="match status" value="1"/>
</dbReference>
<dbReference type="InterPro" id="IPR018510">
    <property type="entry name" value="DAP_epimerase_AS"/>
</dbReference>
<dbReference type="InterPro" id="IPR001653">
    <property type="entry name" value="DAP_epimerase_DapF"/>
</dbReference>
<dbReference type="NCBIfam" id="TIGR00652">
    <property type="entry name" value="DapF"/>
    <property type="match status" value="1"/>
</dbReference>
<dbReference type="PANTHER" id="PTHR31689:SF0">
    <property type="entry name" value="DIAMINOPIMELATE EPIMERASE"/>
    <property type="match status" value="1"/>
</dbReference>
<dbReference type="PANTHER" id="PTHR31689">
    <property type="entry name" value="DIAMINOPIMELATE EPIMERASE, CHLOROPLASTIC"/>
    <property type="match status" value="1"/>
</dbReference>
<dbReference type="Pfam" id="PF01678">
    <property type="entry name" value="DAP_epimerase"/>
    <property type="match status" value="2"/>
</dbReference>
<dbReference type="SUPFAM" id="SSF54506">
    <property type="entry name" value="Diaminopimelate epimerase-like"/>
    <property type="match status" value="1"/>
</dbReference>
<dbReference type="PROSITE" id="PS01326">
    <property type="entry name" value="DAP_EPIMERASE"/>
    <property type="match status" value="1"/>
</dbReference>
<name>DAPF_CUPMC</name>
<accession>Q1LS37</accession>
<gene>
    <name evidence="1" type="primary">dapF</name>
    <name type="ordered locus">Rmet_0153</name>
</gene>
<sequence>MKLQFTKMHGAGNDFIVLDGIHQKLDLTDAQWRALANRHFGIGADQILIVEKSSRDDVDFRYRIVNADGGEVEHCGNGARCFVRFVTDRGMTDKQSVRVEVMNGVITLKLQDDGQVTVDMGEPELTPARVPFIADGLPTRAEAQDTLYGLEVNGRTEWISPVSMGNPHAVQIVDDVEQFPVLQDGPVIEHHKSFPNRVNAGFMQIVDRNTVRLRVFERGAGETLACGTGACAAVVAGIRRGLLDSPVKVHTHGGDLTIAWQGAGQPVQMTGPATTVFEGTIDLSTLPA</sequence>
<evidence type="ECO:0000255" key="1">
    <source>
        <dbReference type="HAMAP-Rule" id="MF_00197"/>
    </source>
</evidence>
<keyword id="KW-0028">Amino-acid biosynthesis</keyword>
<keyword id="KW-0963">Cytoplasm</keyword>
<keyword id="KW-0413">Isomerase</keyword>
<keyword id="KW-0457">Lysine biosynthesis</keyword>
<keyword id="KW-1185">Reference proteome</keyword>
<reference key="1">
    <citation type="journal article" date="2010" name="PLoS ONE">
        <title>The complete genome sequence of Cupriavidus metallidurans strain CH34, a master survivalist in harsh and anthropogenic environments.</title>
        <authorList>
            <person name="Janssen P.J."/>
            <person name="Van Houdt R."/>
            <person name="Moors H."/>
            <person name="Monsieurs P."/>
            <person name="Morin N."/>
            <person name="Michaux A."/>
            <person name="Benotmane M.A."/>
            <person name="Leys N."/>
            <person name="Vallaeys T."/>
            <person name="Lapidus A."/>
            <person name="Monchy S."/>
            <person name="Medigue C."/>
            <person name="Taghavi S."/>
            <person name="McCorkle S."/>
            <person name="Dunn J."/>
            <person name="van der Lelie D."/>
            <person name="Mergeay M."/>
        </authorList>
    </citation>
    <scope>NUCLEOTIDE SEQUENCE [LARGE SCALE GENOMIC DNA]</scope>
    <source>
        <strain>ATCC 43123 / DSM 2839 / NBRC 102507 / CH34</strain>
    </source>
</reference>
<proteinExistence type="inferred from homology"/>
<feature type="chain" id="PRO_1000011943" description="Diaminopimelate epimerase">
    <location>
        <begin position="1"/>
        <end position="288"/>
    </location>
</feature>
<feature type="active site" description="Proton donor" evidence="1">
    <location>
        <position position="75"/>
    </location>
</feature>
<feature type="active site" description="Proton acceptor" evidence="1">
    <location>
        <position position="226"/>
    </location>
</feature>
<feature type="binding site" evidence="1">
    <location>
        <position position="13"/>
    </location>
    <ligand>
        <name>substrate</name>
    </ligand>
</feature>
<feature type="binding site" evidence="1">
    <location>
        <position position="46"/>
    </location>
    <ligand>
        <name>substrate</name>
    </ligand>
</feature>
<feature type="binding site" evidence="1">
    <location>
        <position position="66"/>
    </location>
    <ligand>
        <name>substrate</name>
    </ligand>
</feature>
<feature type="binding site" evidence="1">
    <location>
        <begin position="76"/>
        <end position="77"/>
    </location>
    <ligand>
        <name>substrate</name>
    </ligand>
</feature>
<feature type="binding site" evidence="1">
    <location>
        <position position="166"/>
    </location>
    <ligand>
        <name>substrate</name>
    </ligand>
</feature>
<feature type="binding site" evidence="1">
    <location>
        <position position="199"/>
    </location>
    <ligand>
        <name>substrate</name>
    </ligand>
</feature>
<feature type="binding site" evidence="1">
    <location>
        <begin position="217"/>
        <end position="218"/>
    </location>
    <ligand>
        <name>substrate</name>
    </ligand>
</feature>
<feature type="binding site" evidence="1">
    <location>
        <begin position="227"/>
        <end position="228"/>
    </location>
    <ligand>
        <name>substrate</name>
    </ligand>
</feature>
<feature type="site" description="Could be important to modulate the pK values of the two catalytic cysteine residues" evidence="1">
    <location>
        <position position="168"/>
    </location>
</feature>
<feature type="site" description="Could be important to modulate the pK values of the two catalytic cysteine residues" evidence="1">
    <location>
        <position position="217"/>
    </location>
</feature>
<organism>
    <name type="scientific">Cupriavidus metallidurans (strain ATCC 43123 / DSM 2839 / NBRC 102507 / CH34)</name>
    <name type="common">Ralstonia metallidurans</name>
    <dbReference type="NCBI Taxonomy" id="266264"/>
    <lineage>
        <taxon>Bacteria</taxon>
        <taxon>Pseudomonadati</taxon>
        <taxon>Pseudomonadota</taxon>
        <taxon>Betaproteobacteria</taxon>
        <taxon>Burkholderiales</taxon>
        <taxon>Burkholderiaceae</taxon>
        <taxon>Cupriavidus</taxon>
    </lineage>
</organism>
<comment type="function">
    <text evidence="1">Catalyzes the stereoinversion of LL-2,6-diaminopimelate (L,L-DAP) to meso-diaminopimelate (meso-DAP), a precursor of L-lysine and an essential component of the bacterial peptidoglycan.</text>
</comment>
<comment type="catalytic activity">
    <reaction evidence="1">
        <text>(2S,6S)-2,6-diaminopimelate = meso-2,6-diaminopimelate</text>
        <dbReference type="Rhea" id="RHEA:15393"/>
        <dbReference type="ChEBI" id="CHEBI:57609"/>
        <dbReference type="ChEBI" id="CHEBI:57791"/>
        <dbReference type="EC" id="5.1.1.7"/>
    </reaction>
</comment>
<comment type="pathway">
    <text evidence="1">Amino-acid biosynthesis; L-lysine biosynthesis via DAP pathway; DL-2,6-diaminopimelate from LL-2,6-diaminopimelate: step 1/1.</text>
</comment>
<comment type="subunit">
    <text evidence="1">Homodimer.</text>
</comment>
<comment type="subcellular location">
    <subcellularLocation>
        <location evidence="1">Cytoplasm</location>
    </subcellularLocation>
</comment>
<comment type="similarity">
    <text evidence="1">Belongs to the diaminopimelate epimerase family.</text>
</comment>